<protein>
    <recommendedName>
        <fullName>Neuralized-like protein 4</fullName>
    </recommendedName>
</protein>
<accession>A1L0Y2</accession>
<organism>
    <name type="scientific">Xenopus tropicalis</name>
    <name type="common">Western clawed frog</name>
    <name type="synonym">Silurana tropicalis</name>
    <dbReference type="NCBI Taxonomy" id="8364"/>
    <lineage>
        <taxon>Eukaryota</taxon>
        <taxon>Metazoa</taxon>
        <taxon>Chordata</taxon>
        <taxon>Craniata</taxon>
        <taxon>Vertebrata</taxon>
        <taxon>Euteleostomi</taxon>
        <taxon>Amphibia</taxon>
        <taxon>Batrachia</taxon>
        <taxon>Anura</taxon>
        <taxon>Pipoidea</taxon>
        <taxon>Pipidae</taxon>
        <taxon>Xenopodinae</taxon>
        <taxon>Xenopus</taxon>
        <taxon>Silurana</taxon>
    </lineage>
</organism>
<evidence type="ECO:0000250" key="1"/>
<evidence type="ECO:0000255" key="2">
    <source>
        <dbReference type="PROSITE-ProRule" id="PRU00400"/>
    </source>
</evidence>
<evidence type="ECO:0000256" key="3">
    <source>
        <dbReference type="SAM" id="MobiDB-lite"/>
    </source>
</evidence>
<name>NEUL4_XENTR</name>
<comment type="function">
    <text evidence="1">Promotes CCP110 ubiquitination and proteasome-dependent degradation. By counteracting accumulation of CP110, maintains normal centriolar homeostasis and preventing formation of ectopic microtubular organizing centers (By similarity).</text>
</comment>
<comment type="subcellular location">
    <subcellularLocation>
        <location evidence="1">Cytoplasm</location>
        <location evidence="1">Cytoskeleton</location>
        <location evidence="1">Microtubule organizing center</location>
        <location evidence="1">Centrosome</location>
        <location evidence="1">Centriole</location>
    </subcellularLocation>
</comment>
<comment type="PTM">
    <text evidence="1">Ubiquitinated. This ubiquitination leads to proteasomal degradation (By similarity).</text>
</comment>
<keyword id="KW-0963">Cytoplasm</keyword>
<keyword id="KW-0206">Cytoskeleton</keyword>
<keyword id="KW-1185">Reference proteome</keyword>
<keyword id="KW-0677">Repeat</keyword>
<keyword id="KW-0832">Ubl conjugation</keyword>
<keyword id="KW-0833">Ubl conjugation pathway</keyword>
<gene>
    <name type="primary">neurl4</name>
</gene>
<feature type="chain" id="PRO_0000299107" description="Neuralized-like protein 4">
    <location>
        <begin position="1"/>
        <end position="1477"/>
    </location>
</feature>
<feature type="domain" description="NHR 1" evidence="2">
    <location>
        <begin position="1"/>
        <end position="167"/>
    </location>
</feature>
<feature type="domain" description="NHR 2" evidence="2">
    <location>
        <begin position="250"/>
        <end position="417"/>
    </location>
</feature>
<feature type="domain" description="NHR 3" evidence="2">
    <location>
        <begin position="450"/>
        <end position="616"/>
    </location>
</feature>
<feature type="domain" description="NHR 4" evidence="2">
    <location>
        <begin position="645"/>
        <end position="813"/>
    </location>
</feature>
<feature type="domain" description="NHR 5" evidence="2">
    <location>
        <begin position="841"/>
        <end position="1010"/>
    </location>
</feature>
<feature type="domain" description="NHR 6" evidence="2">
    <location>
        <begin position="1048"/>
        <end position="1211"/>
    </location>
</feature>
<feature type="region of interest" description="Disordered" evidence="3">
    <location>
        <begin position="1"/>
        <end position="26"/>
    </location>
</feature>
<feature type="region of interest" description="Disordered" evidence="3">
    <location>
        <begin position="168"/>
        <end position="196"/>
    </location>
</feature>
<feature type="region of interest" description="Disordered" evidence="3">
    <location>
        <begin position="1012"/>
        <end position="1041"/>
    </location>
</feature>
<feature type="compositionally biased region" description="Acidic residues" evidence="3">
    <location>
        <begin position="171"/>
        <end position="183"/>
    </location>
</feature>
<dbReference type="EMBL" id="BC127281">
    <property type="protein sequence ID" value="AAI27282.1"/>
    <property type="molecule type" value="mRNA"/>
</dbReference>
<dbReference type="RefSeq" id="NP_001090721.1">
    <property type="nucleotide sequence ID" value="NM_001097252.1"/>
</dbReference>
<dbReference type="SMR" id="A1L0Y2"/>
<dbReference type="FunCoup" id="A1L0Y2">
    <property type="interactions" value="1493"/>
</dbReference>
<dbReference type="STRING" id="8364.ENSXETP00000042093"/>
<dbReference type="PaxDb" id="8364-ENSXETP00000038676"/>
<dbReference type="GeneID" id="100036703"/>
<dbReference type="KEGG" id="xtr:100036703"/>
<dbReference type="AGR" id="Xenbase:XB-GENE-5825550"/>
<dbReference type="CTD" id="84461"/>
<dbReference type="Xenbase" id="XB-GENE-5825550">
    <property type="gene designation" value="neurl4"/>
</dbReference>
<dbReference type="eggNOG" id="KOG4625">
    <property type="taxonomic scope" value="Eukaryota"/>
</dbReference>
<dbReference type="InParanoid" id="A1L0Y2"/>
<dbReference type="OMA" id="VMTHRSL"/>
<dbReference type="OrthoDB" id="49113at2759"/>
<dbReference type="Proteomes" id="UP000008143">
    <property type="component" value="Chromosome 3"/>
</dbReference>
<dbReference type="Bgee" id="ENSXETG00000017842">
    <property type="expression patterns" value="Expressed in gastrula and 13 other cell types or tissues"/>
</dbReference>
<dbReference type="GO" id="GO:0005814">
    <property type="term" value="C:centriole"/>
    <property type="evidence" value="ECO:0007669"/>
    <property type="project" value="UniProtKB-SubCell"/>
</dbReference>
<dbReference type="GO" id="GO:0005737">
    <property type="term" value="C:cytoplasm"/>
    <property type="evidence" value="ECO:0007669"/>
    <property type="project" value="UniProtKB-KW"/>
</dbReference>
<dbReference type="CDD" id="cd12887">
    <property type="entry name" value="SPRY_NHR_like"/>
    <property type="match status" value="6"/>
</dbReference>
<dbReference type="FunFam" id="2.60.120.920:FF:000001">
    <property type="entry name" value="neuralized-like protein 4 isoform X1"/>
    <property type="match status" value="4"/>
</dbReference>
<dbReference type="FunFam" id="2.60.120.920:FF:000014">
    <property type="entry name" value="neuralized-like protein 4 isoform X2"/>
    <property type="match status" value="1"/>
</dbReference>
<dbReference type="FunFam" id="2.60.120.920:FF:000016">
    <property type="entry name" value="neuralized-like protein 4 isoform X2"/>
    <property type="match status" value="1"/>
</dbReference>
<dbReference type="Gene3D" id="2.60.120.920">
    <property type="match status" value="6"/>
</dbReference>
<dbReference type="InterPro" id="IPR043136">
    <property type="entry name" value="B30.2/SPRY_sf"/>
</dbReference>
<dbReference type="InterPro" id="IPR013320">
    <property type="entry name" value="ConA-like_dom_sf"/>
</dbReference>
<dbReference type="InterPro" id="IPR037962">
    <property type="entry name" value="Neuralized"/>
</dbReference>
<dbReference type="InterPro" id="IPR006573">
    <property type="entry name" value="NHR_dom"/>
</dbReference>
<dbReference type="PANTHER" id="PTHR12429">
    <property type="entry name" value="NEURALIZED"/>
    <property type="match status" value="1"/>
</dbReference>
<dbReference type="PANTHER" id="PTHR12429:SF14">
    <property type="entry name" value="NEURALIZED-LIKE PROTEIN 4"/>
    <property type="match status" value="1"/>
</dbReference>
<dbReference type="Pfam" id="PF07177">
    <property type="entry name" value="Neuralized"/>
    <property type="match status" value="6"/>
</dbReference>
<dbReference type="SMART" id="SM00588">
    <property type="entry name" value="NEUZ"/>
    <property type="match status" value="6"/>
</dbReference>
<dbReference type="SUPFAM" id="SSF49899">
    <property type="entry name" value="Concanavalin A-like lectins/glucanases"/>
    <property type="match status" value="1"/>
</dbReference>
<dbReference type="PROSITE" id="PS51065">
    <property type="entry name" value="NHR"/>
    <property type="match status" value="6"/>
</dbReference>
<sequence length="1477" mass="160373">MAELHPRTGKLISLSNGNRTAARKQPAQEFNQGLVVSARPLGPGEVFTVRLDRKMNSWSGSMEIGLTTQDPAFLDFPSSATGLKGGSWIVSGCSVLEDGRSVLEEYGQDLDQLGEGDRVGVQRSISGELHLWVNGRDCGAASCGIPPRVWAVVDLYGKCTQITVLSCQPPPEEEEEEDAEEQEGSLVPLGQSRPDKFPNSLDTDSGFPSTELSAVVSNAILSAYHGSLLSVSLGSPPAAIEHSPPTCNDALLFHEKCGTLIKLSNGNKTAERRRPLDEFNNGVVMTNRPLRDCEMFEIRIDKLVDKWSGSIEIGVTTHNPNSLEYPATMTNLRSGTIMMSGCGILTNGKGTRREYCEFSLDELQEGDHIGLTRKSSGALHFYINGMDQGVASCQTPPVVYGVVDLYGMAVKVTIVHNHNHADRLRRNNAILRARSPDTGRHSSSTPEPGQLLFHSNCGQKASIINGGRTALRPHATDDFNHGVVLSNRPLQNNEVFQVRIDKMVDKWAGSIEIGVTTHNPAYLQLPSTMTNLRSGTWMMTGNGVMHNGTTILDEYGHNLDRLKAGDTVGVVRREDGTLNFFVNGIAQGVAAWNVPPNVFAVVDLYGQAAQATIMDESDALPLPGDEDEGLALTPGTPCALLSLSDLRFHHLHGANALITNGGRTVLRKNSRSEFNDAIVMSSRPLRDGEMFEIVIQKMVDRWSGSIEAGVTAIRPEDLEFPNTMTDIDYDTWMLSGTAIMQDGNTLRNNYGCDLDSLGAGSRIGMMKTIRGDLHYFINGEDQGVACTGLPMGRDIYAVIDLYGQCVQVSLTGGSGLVDNSLSASHVTDKSLPSQSPVPSVSHRFHTVCGKNVSVLCDGTRAERGAGCSHGIVFSSRELLTNETFEIRVEKIEPHWSGSCNIGVTSLSPHEVSLLGGGLPERALELRSKVTWLVCGSEVTRNGQRLRENYCNSLERVRVGSRLGVRRDSDDTLHILMNGEDMGPAACGIPKAVYAVLDIHGCITALSTVSSSLLEEPDATKPPSITSESEEEEDPADHGDPHTVIQAHSLQFLANHGKNILLSHGNRTATRVSSYNQGIVVLPQPLPRLFLFQIRIDQLSPHWTSSLSIGVIAVSPERLNFPATAAALKRSSWIFQRSAVLCNGVKIREGYGPNLDLCPEGTCLGLLLDSSGGLHLYVNGLDQGVGAQDLPEVCYVLVDLYGQCEQVSIVTGEAQGAELDAHEGQLPGEREKADMVDGVKESLCWVPPDPVALLSCEYLALCTRFKDLLLLPDGYFLEDSKLCVCHCDSCHKLRGDETYRKRGDPPREYAEPIGWCSFPLRLSPRSSCAQYKKWHIAYQGSSAGTIRRTLDRGDLLPGSACILTSVPAKSDPQSGFPAAEPNVLPPRDLQSVVLSPTLRYAALPEMCPKVMFRDPRSQRMFGAQVALQVCVRPGSYKTGPPSACAIDLMDPRIPSSEMEFLTKEKGATVLRGLLVRVE</sequence>
<proteinExistence type="evidence at transcript level"/>
<reference key="1">
    <citation type="submission" date="2006-11" db="EMBL/GenBank/DDBJ databases">
        <authorList>
            <consortium name="NIH - Xenopus Gene Collection (XGC) project"/>
        </authorList>
    </citation>
    <scope>NUCLEOTIDE SEQUENCE [LARGE SCALE MRNA]</scope>
    <source>
        <tissue>Testis</tissue>
    </source>
</reference>